<comment type="function">
    <text evidence="2">A component of FAZ filament that is required for correct FAZ assembly and attachment. Not essential for new flagellum growth.</text>
</comment>
<comment type="subcellular location">
    <subcellularLocation>
        <location evidence="2">Cell projection</location>
        <location evidence="2">Cilium</location>
        <location evidence="2">Flagellum</location>
    </subcellularLocation>
    <text evidence="2">The flagellum attachment zone (FAZ) is a complex structure comprising a FAZ filament structure, a specialised microtubule quartet (MtQ) and the plasma membrane attachment, a specialised area of flagellum.</text>
</comment>
<comment type="disruption phenotype">
    <text evidence="2">Assembly of a compromised FAZ and defects in flagellum attachment and cytokinesis in procyclic trypanosomes resulting in generation of 0N1K cells (zoids) and multinucleated cells, demonstrates the role of an attached flagellum in cellular morphogenesis.</text>
</comment>
<protein>
    <recommendedName>
        <fullName evidence="3">Flagellar attachment zone protein 1</fullName>
    </recommendedName>
</protein>
<organism>
    <name type="scientific">Trypanosoma brucei brucei (strain 927/4 GUTat10.1)</name>
    <dbReference type="NCBI Taxonomy" id="185431"/>
    <lineage>
        <taxon>Eukaryota</taxon>
        <taxon>Discoba</taxon>
        <taxon>Euglenozoa</taxon>
        <taxon>Kinetoplastea</taxon>
        <taxon>Metakinetoplastina</taxon>
        <taxon>Trypanosomatida</taxon>
        <taxon>Trypanosomatidae</taxon>
        <taxon>Trypanosoma</taxon>
    </lineage>
</organism>
<feature type="chain" id="PRO_0000414606" description="Flagellar attachment zone protein 1">
    <location>
        <begin position="1"/>
        <end position="1692"/>
    </location>
</feature>
<feature type="repeat" description="1" evidence="1">
    <location>
        <begin position="1012"/>
        <end position="1025"/>
    </location>
</feature>
<feature type="repeat" description="2" evidence="1">
    <location>
        <begin position="1026"/>
        <end position="1039"/>
    </location>
</feature>
<feature type="repeat" description="3" evidence="1">
    <location>
        <begin position="1040"/>
        <end position="1053"/>
    </location>
</feature>
<feature type="repeat" description="4" evidence="1">
    <location>
        <begin position="1054"/>
        <end position="1067"/>
    </location>
</feature>
<feature type="repeat" description="5" evidence="1">
    <location>
        <begin position="1068"/>
        <end position="1081"/>
    </location>
</feature>
<feature type="repeat" description="6" evidence="1">
    <location>
        <begin position="1082"/>
        <end position="1095"/>
    </location>
</feature>
<feature type="repeat" description="7" evidence="1">
    <location>
        <begin position="1096"/>
        <end position="1109"/>
    </location>
</feature>
<feature type="repeat" description="8" evidence="1">
    <location>
        <begin position="1110"/>
        <end position="1123"/>
    </location>
</feature>
<feature type="repeat" description="9" evidence="1">
    <location>
        <begin position="1124"/>
        <end position="1137"/>
    </location>
</feature>
<feature type="repeat" description="10" evidence="1">
    <location>
        <begin position="1138"/>
        <end position="1151"/>
    </location>
</feature>
<feature type="repeat" description="11" evidence="1">
    <location>
        <begin position="1152"/>
        <end position="1165"/>
    </location>
</feature>
<feature type="repeat" description="12" evidence="1">
    <location>
        <begin position="1166"/>
        <end position="1179"/>
    </location>
</feature>
<feature type="repeat" description="13" evidence="1">
    <location>
        <begin position="1180"/>
        <end position="1193"/>
    </location>
</feature>
<feature type="repeat" description="14" evidence="1">
    <location>
        <begin position="1194"/>
        <end position="1207"/>
    </location>
</feature>
<feature type="repeat" description="15" evidence="1">
    <location>
        <begin position="1208"/>
        <end position="1221"/>
    </location>
</feature>
<feature type="repeat" description="16" evidence="1">
    <location>
        <begin position="1222"/>
        <end position="1235"/>
    </location>
</feature>
<feature type="repeat" description="17" evidence="1">
    <location>
        <begin position="1236"/>
        <end position="1249"/>
    </location>
</feature>
<feature type="repeat" description="18" evidence="1">
    <location>
        <begin position="1250"/>
        <end position="1263"/>
    </location>
</feature>
<feature type="repeat" description="19" evidence="1">
    <location>
        <begin position="1264"/>
        <end position="1277"/>
    </location>
</feature>
<feature type="repeat" description="20" evidence="1">
    <location>
        <begin position="1278"/>
        <end position="1291"/>
    </location>
</feature>
<feature type="repeat" description="21" evidence="1">
    <location>
        <begin position="1292"/>
        <end position="1305"/>
    </location>
</feature>
<feature type="repeat" description="22" evidence="1">
    <location>
        <begin position="1306"/>
        <end position="1319"/>
    </location>
</feature>
<feature type="repeat" description="23" evidence="1">
    <location>
        <begin position="1320"/>
        <end position="1333"/>
    </location>
</feature>
<feature type="repeat" description="24" evidence="1">
    <location>
        <begin position="1334"/>
        <end position="1347"/>
    </location>
</feature>
<feature type="repeat" description="25" evidence="1">
    <location>
        <begin position="1348"/>
        <end position="1361"/>
    </location>
</feature>
<feature type="repeat" description="26" evidence="1">
    <location>
        <begin position="1362"/>
        <end position="1375"/>
    </location>
</feature>
<feature type="repeat" description="27" evidence="1">
    <location>
        <begin position="1376"/>
        <end position="1389"/>
    </location>
</feature>
<feature type="repeat" description="28" evidence="1">
    <location>
        <begin position="1390"/>
        <end position="1403"/>
    </location>
</feature>
<feature type="repeat" description="29" evidence="1">
    <location>
        <begin position="1404"/>
        <end position="1417"/>
    </location>
</feature>
<feature type="repeat" description="30" evidence="1">
    <location>
        <begin position="1418"/>
        <end position="1431"/>
    </location>
</feature>
<feature type="repeat" description="31" evidence="1">
    <location>
        <begin position="1432"/>
        <end position="1445"/>
    </location>
</feature>
<feature type="repeat" description="32" evidence="1">
    <location>
        <begin position="1446"/>
        <end position="1459"/>
    </location>
</feature>
<feature type="repeat" description="33" evidence="1">
    <location>
        <begin position="1460"/>
        <end position="1473"/>
    </location>
</feature>
<feature type="repeat" description="34" evidence="1">
    <location>
        <begin position="1474"/>
        <end position="1487"/>
    </location>
</feature>
<feature type="repeat" description="35" evidence="1">
    <location>
        <begin position="1488"/>
        <end position="1501"/>
    </location>
</feature>
<feature type="repeat" description="36" evidence="1">
    <location>
        <begin position="1502"/>
        <end position="1515"/>
    </location>
</feature>
<feature type="repeat" description="37" evidence="1">
    <location>
        <begin position="1516"/>
        <end position="1529"/>
    </location>
</feature>
<feature type="region of interest" description="37 X 14 AA tandem repeats of E-E-L-E-L-K-[VA]-A-E-N-E-K-L-A" evidence="1">
    <location>
        <begin position="1012"/>
        <end position="1529"/>
    </location>
</feature>
<feature type="coiled-coil region" evidence="1">
    <location>
        <begin position="613"/>
        <end position="657"/>
    </location>
</feature>
<feature type="coiled-coil region" evidence="1">
    <location>
        <begin position="684"/>
        <end position="864"/>
    </location>
</feature>
<feature type="coiled-coil region" evidence="1">
    <location>
        <begin position="903"/>
        <end position="1607"/>
    </location>
</feature>
<name>FAZ1_TRYB2</name>
<sequence length="1692" mass="192570">MALLNVISENPLTLQPGQVIAFDHLANGEHWQWALGTVVSSDKHVVVVEQWAVNEGSCETLKHNISSEIQKEMKRMGVFQEQLSSARDKLAAIRSENEDRVSAARAVFEDAKARVASVDEVHMREVTSQACPSPVAVEVLKSVLALAQNDPTVTNCSTWDDIRMEYRRPNAIADFISADITGKTYPNAEEICSSLNEQRLSSLAASRDSEAISSLHHWVLSALAYQEAYCRLTTDTRVQEQNDAIANCIAGMKGCRLKVMKLKEELERGGTPTFGGQLTSFTKTSVQLKAPLSSVISIVGVDPSAQDCVLTDDEVGLILDKAEQTRLQINDHFSHLSNSYMEAMAELHCLSMYTSELEERRLNLQERFVFSLFTNAGKTNAPRRERIETDVGLRSVEAPRGDSANNIKDLQEIIKELSSHDERWMYRNEPTVTTKHRKSYPGREWSKVVERKPEELLSTFRTEQAAACHVPEDAIRNIEFTATSEKLQVSFDVQHPVKQTAAEINKRLQEFPSRGMDRMLCDVDQPKKGLDRAIVEVCRAFDLREHAFRGMTFDKFIEEVAMKGRVGDKDAYESEIGDLLMLLDKIHNENRSLQYTLEKSAEEFRRQTASTMREQESLRQRNGELHAEIGRLRDLVEKLRDLADNQASELELLKLQKTQANQIRAQRNLSTFRGDDTAEPVYCVTLDELREQTEHCDQVERELERQREQCQNLLNAQDDLLAELSGVSEEKEKLEAECERLEAELRQMEEKSRLSEQGLSEMTQRLEEKQAEIEGLLENLEQLDEQLEALRAAEKSAQAHIEARDREISDLQQRLEGEIDDHIKTTALLEELRKHYNNLEELFDKQEAELMAYREKRQNAHKVRSLEPTLRPIGTQTKPFQEMVSADEISSEPLLSVTLDEYNDHMHRSNQFQQENDLLRQQLQQANDERENLHDRLEQLMAENQSLSEQLHNMHEELEREERDRSGVTLQNERLAEEIQRKTAENEQLVLENNKSRSDIRNLNVQVQRLMEELELKAAENEKLAEELELKAAENEKLAEELELKVAENEKLAEELELKVAENEKLAEELELKAAENEKLAEELELKAAENEKLAEELELKAAENEKLAEELELKAAENEKLAEELELKAAENEKLAEELELKAAENEKLAEELELKAAENEKLAEELELKVAENEKLAEELELKAAENEKLAEELELKVAENEKLAEELELKAAENEKLAEELELKAAENEKLAEELELKAAENEKLAEELELKAAENEKLAEELELKVAENEKLAEELELKAAENEKLAEELELKVAENEKLAEELELKAAENEKLAEELELKVAENEKLAEELELKAAENEKLAEELELKVAENEKLAEELELKAAENEKLAEELELKAAENEKLAEELELKAAENEKLAEELELKAAENEKLAEELELKAAENEKLAEELELKVAENEKLAEELELKAAENEKLAEELELKVAENEKLAEELELKAAENEKLAEELELKAAENEKLAEELELKAAENEKLAEELELKVAENKRLAEEVTQRLSEKELLAEDTSARLLEADSANSALQCKVKHLEEKLTLLSSEKETALATLEAEIVDLLTQLKGLNGTNSALESLCASKEKELVFLREHCELWTDPTTKKEKVITRHVKVFDGNEWMKLITDRPEALMSAFVIDAGNACHVPGDQIHEVSFLNNKEKH</sequence>
<dbReference type="EMBL" id="AC023489">
    <property type="protein sequence ID" value="AAX79229.1"/>
    <property type="molecule type" value="Genomic_DNA"/>
</dbReference>
<dbReference type="EMBL" id="CP000067">
    <property type="protein sequence ID" value="AAZ10965.1"/>
    <property type="molecule type" value="Genomic_DNA"/>
</dbReference>
<dbReference type="RefSeq" id="XP_844524.1">
    <property type="nucleotide sequence ID" value="XM_839431.1"/>
</dbReference>
<dbReference type="SMR" id="Q585H6"/>
<dbReference type="STRING" id="185431.Q585H6"/>
<dbReference type="PaxDb" id="5691-AAZ10965"/>
<dbReference type="GeneID" id="3656912"/>
<dbReference type="KEGG" id="tbr:Tb927.4.3740"/>
<dbReference type="VEuPathDB" id="TriTrypDB:Tb927.4.3740"/>
<dbReference type="eggNOG" id="ENOG502QU7S">
    <property type="taxonomic scope" value="Eukaryota"/>
</dbReference>
<dbReference type="InParanoid" id="Q585H6"/>
<dbReference type="OMA" id="HCLSMYT"/>
<dbReference type="OrthoDB" id="10255522at2759"/>
<dbReference type="Proteomes" id="UP000008524">
    <property type="component" value="Chromosome 4"/>
</dbReference>
<dbReference type="GO" id="GO:0020016">
    <property type="term" value="C:ciliary pocket"/>
    <property type="evidence" value="ECO:0000266"/>
    <property type="project" value="GeneDB"/>
</dbReference>
<dbReference type="GO" id="GO:0005929">
    <property type="term" value="C:cilium"/>
    <property type="evidence" value="ECO:0000314"/>
    <property type="project" value="GeneDB"/>
</dbReference>
<dbReference type="GO" id="GO:0005856">
    <property type="term" value="C:cytoskeleton"/>
    <property type="evidence" value="ECO:0000314"/>
    <property type="project" value="GeneDB"/>
</dbReference>
<dbReference type="GO" id="GO:0120119">
    <property type="term" value="C:flagellum attachment zone"/>
    <property type="evidence" value="ECO:0000314"/>
    <property type="project" value="GeneDB"/>
</dbReference>
<dbReference type="GO" id="GO:0031514">
    <property type="term" value="C:motile cilium"/>
    <property type="evidence" value="ECO:0007669"/>
    <property type="project" value="UniProtKB-SubCell"/>
</dbReference>
<dbReference type="GO" id="GO:0060271">
    <property type="term" value="P:cilium assembly"/>
    <property type="evidence" value="ECO:0000314"/>
    <property type="project" value="GeneDB"/>
</dbReference>
<dbReference type="GO" id="GO:0000281">
    <property type="term" value="P:mitotic cytokinesis"/>
    <property type="evidence" value="ECO:0000314"/>
    <property type="project" value="GeneDB"/>
</dbReference>
<dbReference type="Gene3D" id="1.20.920.20">
    <property type="match status" value="1"/>
</dbReference>
<dbReference type="InterPro" id="IPR056615">
    <property type="entry name" value="FAZ1_C"/>
</dbReference>
<dbReference type="InterPro" id="IPR056614">
    <property type="entry name" value="FAZ1_cons"/>
</dbReference>
<dbReference type="PANTHER" id="PTHR32083">
    <property type="entry name" value="CILIA AND FLAGELLA-ASSOCIATED PROTEIN 58-RELATED"/>
    <property type="match status" value="1"/>
</dbReference>
<dbReference type="PANTHER" id="PTHR32083:SF48">
    <property type="entry name" value="TRANS-GOLGI NETWORK-LOCALIZED SYP41-INTERACTING PROTEIN 1"/>
    <property type="match status" value="1"/>
</dbReference>
<dbReference type="Pfam" id="PF23404">
    <property type="entry name" value="FAZ1_C"/>
    <property type="match status" value="25"/>
</dbReference>
<dbReference type="Pfam" id="PF23398">
    <property type="entry name" value="FAZ1_cons"/>
    <property type="match status" value="2"/>
</dbReference>
<evidence type="ECO:0000255" key="1"/>
<evidence type="ECO:0000269" key="2">
    <source>
    </source>
</evidence>
<evidence type="ECO:0000303" key="3">
    <source>
    </source>
</evidence>
<evidence type="ECO:0000305" key="4"/>
<evidence type="ECO:0000312" key="5">
    <source>
        <dbReference type="EMBL" id="AAX79229.1"/>
    </source>
</evidence>
<evidence type="ECO:0000312" key="6">
    <source>
        <dbReference type="Proteomes" id="UP000008524"/>
    </source>
</evidence>
<proteinExistence type="predicted"/>
<gene>
    <name evidence="3" type="primary">FAZ1</name>
    <name type="ORF">Tb927.4.3740</name>
</gene>
<keyword id="KW-0966">Cell projection</keyword>
<keyword id="KW-0969">Cilium</keyword>
<keyword id="KW-0175">Coiled coil</keyword>
<keyword id="KW-0282">Flagellum</keyword>
<keyword id="KW-1185">Reference proteome</keyword>
<keyword id="KW-0677">Repeat</keyword>
<reference evidence="5" key="1">
    <citation type="journal article" date="2005" name="Science">
        <title>The genome of the African trypanosome Trypanosoma brucei.</title>
        <authorList>
            <person name="Berriman M."/>
            <person name="Ghedin E."/>
            <person name="Hertz-Fowler C."/>
            <person name="Blandin G."/>
            <person name="Renauld H."/>
            <person name="Bartholomeu D.C."/>
            <person name="Lennard N.J."/>
            <person name="Caler E."/>
            <person name="Hamlin N.E."/>
            <person name="Haas B."/>
            <person name="Bohme U."/>
            <person name="Hannick L."/>
            <person name="Aslett M.A."/>
            <person name="Shallom J."/>
            <person name="Marcello L."/>
            <person name="Hou L."/>
            <person name="Wickstead B."/>
            <person name="Alsmark U.C.M."/>
            <person name="Arrowsmith C."/>
            <person name="Atkin R.J."/>
            <person name="Barron A.J."/>
            <person name="Bringaud F."/>
            <person name="Brooks K."/>
            <person name="Carrington M."/>
            <person name="Cherevach I."/>
            <person name="Chillingworth T.J."/>
            <person name="Churcher C."/>
            <person name="Clark L.N."/>
            <person name="Corton C.H."/>
            <person name="Cronin A."/>
            <person name="Davies R.M."/>
            <person name="Doggett J."/>
            <person name="Djikeng A."/>
            <person name="Feldblyum T."/>
            <person name="Field M.C."/>
            <person name="Fraser A."/>
            <person name="Goodhead I."/>
            <person name="Hance Z."/>
            <person name="Harper D."/>
            <person name="Harris B.R."/>
            <person name="Hauser H."/>
            <person name="Hostetler J."/>
            <person name="Ivens A."/>
            <person name="Jagels K."/>
            <person name="Johnson D."/>
            <person name="Johnson J."/>
            <person name="Jones K."/>
            <person name="Kerhornou A.X."/>
            <person name="Koo H."/>
            <person name="Larke N."/>
            <person name="Landfear S."/>
            <person name="Larkin C."/>
            <person name="Leech V."/>
            <person name="Line A."/>
            <person name="Lord A."/>
            <person name="Macleod A."/>
            <person name="Mooney P.J."/>
            <person name="Moule S."/>
            <person name="Martin D.M."/>
            <person name="Morgan G.W."/>
            <person name="Mungall K."/>
            <person name="Norbertczak H."/>
            <person name="Ormond D."/>
            <person name="Pai G."/>
            <person name="Peacock C.S."/>
            <person name="Peterson J."/>
            <person name="Quail M.A."/>
            <person name="Rabbinowitsch E."/>
            <person name="Rajandream M.A."/>
            <person name="Reitter C."/>
            <person name="Salzberg S.L."/>
            <person name="Sanders M."/>
            <person name="Schobel S."/>
            <person name="Sharp S."/>
            <person name="Simmonds M."/>
            <person name="Simpson A.J."/>
            <person name="Tallon L."/>
            <person name="Turner C.M."/>
            <person name="Tait A."/>
            <person name="Tivey A.R."/>
            <person name="Van Aken S."/>
            <person name="Walker D."/>
            <person name="Wanless D."/>
            <person name="Wang S."/>
            <person name="White B."/>
            <person name="White O."/>
            <person name="Whitehead S."/>
            <person name="Woodward J."/>
            <person name="Wortman J."/>
            <person name="Adams M.D."/>
            <person name="Embley T.M."/>
            <person name="Gull K."/>
            <person name="Ullu E."/>
            <person name="Barry J.D."/>
            <person name="Fairlamb A.H."/>
            <person name="Opperdoes F."/>
            <person name="Barrell B.G."/>
            <person name="Donelson J.E."/>
            <person name="Hall N."/>
            <person name="Fraser C.M."/>
            <person name="Melville S.E."/>
            <person name="El-Sayed N.M.A."/>
        </authorList>
    </citation>
    <scope>NUCLEOTIDE SEQUENCE [LARGE SCALE GENOMIC DNA]</scope>
    <source>
        <strain evidence="6">927/4 GUTat10.1</strain>
    </source>
</reference>
<reference evidence="4" key="2">
    <citation type="journal article" date="2008" name="Protist">
        <title>A repetitive protein essential for the flagellum attachment zone filament structure and function in Trypanosoma brucei.</title>
        <authorList>
            <person name="Vaughan S."/>
            <person name="Kohl L."/>
            <person name="Ngai I."/>
            <person name="Wheeler R.J."/>
            <person name="Gull K."/>
        </authorList>
    </citation>
    <scope>FUNCTION</scope>
    <scope>SUBCELLULAR LOCATION</scope>
    <scope>DISRUPTION PHENOTYPE</scope>
</reference>
<accession>Q585H6</accession>
<accession>D6XFW0</accession>